<organism>
    <name type="scientific">Ralstonia nicotianae (strain ATCC BAA-1114 / GMI1000)</name>
    <name type="common">Ralstonia solanacearum</name>
    <dbReference type="NCBI Taxonomy" id="267608"/>
    <lineage>
        <taxon>Bacteria</taxon>
        <taxon>Pseudomonadati</taxon>
        <taxon>Pseudomonadota</taxon>
        <taxon>Betaproteobacteria</taxon>
        <taxon>Burkholderiales</taxon>
        <taxon>Burkholderiaceae</taxon>
        <taxon>Ralstonia</taxon>
        <taxon>Ralstonia solanacearum species complex</taxon>
    </lineage>
</organism>
<name>SYQ_RALN1</name>
<reference key="1">
    <citation type="journal article" date="2002" name="Nature">
        <title>Genome sequence of the plant pathogen Ralstonia solanacearum.</title>
        <authorList>
            <person name="Salanoubat M."/>
            <person name="Genin S."/>
            <person name="Artiguenave F."/>
            <person name="Gouzy J."/>
            <person name="Mangenot S."/>
            <person name="Arlat M."/>
            <person name="Billault A."/>
            <person name="Brottier P."/>
            <person name="Camus J.-C."/>
            <person name="Cattolico L."/>
            <person name="Chandler M."/>
            <person name="Choisne N."/>
            <person name="Claudel-Renard C."/>
            <person name="Cunnac S."/>
            <person name="Demange N."/>
            <person name="Gaspin C."/>
            <person name="Lavie M."/>
            <person name="Moisan A."/>
            <person name="Robert C."/>
            <person name="Saurin W."/>
            <person name="Schiex T."/>
            <person name="Siguier P."/>
            <person name="Thebault P."/>
            <person name="Whalen M."/>
            <person name="Wincker P."/>
            <person name="Levy M."/>
            <person name="Weissenbach J."/>
            <person name="Boucher C.A."/>
        </authorList>
    </citation>
    <scope>NUCLEOTIDE SEQUENCE [LARGE SCALE GENOMIC DNA]</scope>
    <source>
        <strain>ATCC BAA-1114 / GMI1000</strain>
    </source>
</reference>
<proteinExistence type="inferred from homology"/>
<evidence type="ECO:0000255" key="1">
    <source>
        <dbReference type="HAMAP-Rule" id="MF_00126"/>
    </source>
</evidence>
<sequence>MSQDNATGAAAASTSNFLRQIIDTDLEQGTYAGRQDTAGHALPPIITRFPPEPNGYLHIGHAKSIWVNFGLAKEYGGRCHLRFDDTNPVKEDTEYVDSIIDAVHWLGYSWQNGTGEHLYYASDYFEQLYGFAEVLIQRGAAYIDSQSAEQIAANRGDFTRPGTPSPFRDRSVEENLALFRDMRAGKYQDGQHVLRARIDMAAPNIVMRDPVLYRIRHAHHHRTGDAWCIYPMYDFTHCISDALENITHSLCTLEFENNRPLYDWVLDHLRDAGALPAPLPHQYEFARLHLTYAITSKRKLLQLVNEKRVDGWDDPRMPTLVGIRRRGYTPESIQLFCERVGVSKADSWIDMSILEAAVRDDLDARAPRSVAVLDPVKLILDNVPADFNEPCSAPVHPKQPELGRREFPLTRELWIEREDFTETPPKGYFRLFPGNKVRLRYGYVIECTGCDKDADGNITAVHANIIPDTKSGTPGADSVKVKGNIHWVSAAHALEAEVRLYDRLFTDPQPDSGDKNFLDALNPDAKRVVTAYLEPTLATAKPEDRFQFERHGYFVADRIDSQPGKPVFNRVVGLKDSWGK</sequence>
<accession>Q8Y199</accession>
<keyword id="KW-0030">Aminoacyl-tRNA synthetase</keyword>
<keyword id="KW-0067">ATP-binding</keyword>
<keyword id="KW-0963">Cytoplasm</keyword>
<keyword id="KW-0436">Ligase</keyword>
<keyword id="KW-0547">Nucleotide-binding</keyword>
<keyword id="KW-0648">Protein biosynthesis</keyword>
<keyword id="KW-1185">Reference proteome</keyword>
<comment type="catalytic activity">
    <reaction evidence="1">
        <text>tRNA(Gln) + L-glutamine + ATP = L-glutaminyl-tRNA(Gln) + AMP + diphosphate</text>
        <dbReference type="Rhea" id="RHEA:20121"/>
        <dbReference type="Rhea" id="RHEA-COMP:9662"/>
        <dbReference type="Rhea" id="RHEA-COMP:9681"/>
        <dbReference type="ChEBI" id="CHEBI:30616"/>
        <dbReference type="ChEBI" id="CHEBI:33019"/>
        <dbReference type="ChEBI" id="CHEBI:58359"/>
        <dbReference type="ChEBI" id="CHEBI:78442"/>
        <dbReference type="ChEBI" id="CHEBI:78521"/>
        <dbReference type="ChEBI" id="CHEBI:456215"/>
        <dbReference type="EC" id="6.1.1.18"/>
    </reaction>
</comment>
<comment type="subunit">
    <text evidence="1">Monomer.</text>
</comment>
<comment type="subcellular location">
    <subcellularLocation>
        <location evidence="1">Cytoplasm</location>
    </subcellularLocation>
</comment>
<comment type="similarity">
    <text evidence="1">Belongs to the class-I aminoacyl-tRNA synthetase family.</text>
</comment>
<feature type="chain" id="PRO_0000195846" description="Glutamine--tRNA ligase">
    <location>
        <begin position="1"/>
        <end position="580"/>
    </location>
</feature>
<feature type="short sequence motif" description="'HIGH' region" evidence="1">
    <location>
        <begin position="51"/>
        <end position="61"/>
    </location>
</feature>
<feature type="short sequence motif" description="'KMSKS' region" evidence="1">
    <location>
        <begin position="294"/>
        <end position="298"/>
    </location>
</feature>
<feature type="binding site" evidence="1">
    <location>
        <begin position="52"/>
        <end position="54"/>
    </location>
    <ligand>
        <name>ATP</name>
        <dbReference type="ChEBI" id="CHEBI:30616"/>
    </ligand>
</feature>
<feature type="binding site" evidence="1">
    <location>
        <begin position="58"/>
        <end position="64"/>
    </location>
    <ligand>
        <name>ATP</name>
        <dbReference type="ChEBI" id="CHEBI:30616"/>
    </ligand>
</feature>
<feature type="binding site" evidence="1">
    <location>
        <position position="84"/>
    </location>
    <ligand>
        <name>L-glutamine</name>
        <dbReference type="ChEBI" id="CHEBI:58359"/>
    </ligand>
</feature>
<feature type="binding site" evidence="1">
    <location>
        <position position="233"/>
    </location>
    <ligand>
        <name>L-glutamine</name>
        <dbReference type="ChEBI" id="CHEBI:58359"/>
    </ligand>
</feature>
<feature type="binding site" evidence="1">
    <location>
        <position position="252"/>
    </location>
    <ligand>
        <name>ATP</name>
        <dbReference type="ChEBI" id="CHEBI:30616"/>
    </ligand>
</feature>
<feature type="binding site" evidence="1">
    <location>
        <begin position="287"/>
        <end position="288"/>
    </location>
    <ligand>
        <name>ATP</name>
        <dbReference type="ChEBI" id="CHEBI:30616"/>
    </ligand>
</feature>
<gene>
    <name evidence="1" type="primary">glnS</name>
    <name type="ordered locus">RSc0791</name>
    <name type="ORF">RS05046</name>
</gene>
<dbReference type="EC" id="6.1.1.18" evidence="1"/>
<dbReference type="EMBL" id="AL646052">
    <property type="protein sequence ID" value="CAD14493.1"/>
    <property type="molecule type" value="Genomic_DNA"/>
</dbReference>
<dbReference type="RefSeq" id="WP_011000745.1">
    <property type="nucleotide sequence ID" value="NC_003295.1"/>
</dbReference>
<dbReference type="SMR" id="Q8Y199"/>
<dbReference type="STRING" id="267608.RSc0791"/>
<dbReference type="EnsemblBacteria" id="CAD14493">
    <property type="protein sequence ID" value="CAD14493"/>
    <property type="gene ID" value="RSc0791"/>
</dbReference>
<dbReference type="KEGG" id="rso:RSc0791"/>
<dbReference type="eggNOG" id="COG0008">
    <property type="taxonomic scope" value="Bacteria"/>
</dbReference>
<dbReference type="HOGENOM" id="CLU_001882_2_3_4"/>
<dbReference type="Proteomes" id="UP000001436">
    <property type="component" value="Chromosome"/>
</dbReference>
<dbReference type="GO" id="GO:0005829">
    <property type="term" value="C:cytosol"/>
    <property type="evidence" value="ECO:0007669"/>
    <property type="project" value="TreeGrafter"/>
</dbReference>
<dbReference type="GO" id="GO:0005524">
    <property type="term" value="F:ATP binding"/>
    <property type="evidence" value="ECO:0007669"/>
    <property type="project" value="UniProtKB-UniRule"/>
</dbReference>
<dbReference type="GO" id="GO:0004819">
    <property type="term" value="F:glutamine-tRNA ligase activity"/>
    <property type="evidence" value="ECO:0007669"/>
    <property type="project" value="UniProtKB-UniRule"/>
</dbReference>
<dbReference type="GO" id="GO:0006425">
    <property type="term" value="P:glutaminyl-tRNA aminoacylation"/>
    <property type="evidence" value="ECO:0007669"/>
    <property type="project" value="InterPro"/>
</dbReference>
<dbReference type="GO" id="GO:0006424">
    <property type="term" value="P:glutamyl-tRNA aminoacylation"/>
    <property type="evidence" value="ECO:0007669"/>
    <property type="project" value="UniProtKB-UniRule"/>
</dbReference>
<dbReference type="CDD" id="cd00807">
    <property type="entry name" value="GlnRS_core"/>
    <property type="match status" value="1"/>
</dbReference>
<dbReference type="FunFam" id="1.10.1160.10:FF:000001">
    <property type="entry name" value="Glutamine--tRNA ligase"/>
    <property type="match status" value="1"/>
</dbReference>
<dbReference type="FunFam" id="3.90.800.10:FF:000001">
    <property type="entry name" value="Glutamine--tRNA ligase"/>
    <property type="match status" value="1"/>
</dbReference>
<dbReference type="FunFam" id="3.40.50.620:FF:000037">
    <property type="entry name" value="Glutamine--tRNA ligase cytoplasmic"/>
    <property type="match status" value="1"/>
</dbReference>
<dbReference type="Gene3D" id="1.10.1160.10">
    <property type="entry name" value="Glutamyl-trna Synthetase, Domain 2"/>
    <property type="match status" value="1"/>
</dbReference>
<dbReference type="Gene3D" id="3.90.800.10">
    <property type="entry name" value="Glutamyl-tRNA Synthetase, Domain 3"/>
    <property type="match status" value="1"/>
</dbReference>
<dbReference type="Gene3D" id="3.40.50.620">
    <property type="entry name" value="HUPs"/>
    <property type="match status" value="1"/>
</dbReference>
<dbReference type="Gene3D" id="2.40.240.10">
    <property type="entry name" value="Ribosomal Protein L25, Chain P"/>
    <property type="match status" value="2"/>
</dbReference>
<dbReference type="HAMAP" id="MF_00126">
    <property type="entry name" value="Gln_tRNA_synth"/>
    <property type="match status" value="1"/>
</dbReference>
<dbReference type="InterPro" id="IPR001412">
    <property type="entry name" value="aa-tRNA-synth_I_CS"/>
</dbReference>
<dbReference type="InterPro" id="IPR004514">
    <property type="entry name" value="Gln-tRNA-synth"/>
</dbReference>
<dbReference type="InterPro" id="IPR050132">
    <property type="entry name" value="Gln/Glu-tRNA_Ligase"/>
</dbReference>
<dbReference type="InterPro" id="IPR022861">
    <property type="entry name" value="Gln_tRNA_ligase_bac"/>
</dbReference>
<dbReference type="InterPro" id="IPR000924">
    <property type="entry name" value="Glu/Gln-tRNA-synth"/>
</dbReference>
<dbReference type="InterPro" id="IPR020058">
    <property type="entry name" value="Glu/Gln-tRNA-synth_Ib_cat-dom"/>
</dbReference>
<dbReference type="InterPro" id="IPR020059">
    <property type="entry name" value="Glu/Gln-tRNA-synth_Ib_codon-bd"/>
</dbReference>
<dbReference type="InterPro" id="IPR020061">
    <property type="entry name" value="Glu_tRNA_lig_a-bdl"/>
</dbReference>
<dbReference type="InterPro" id="IPR020056">
    <property type="entry name" value="Rbsml_bL25/Gln-tRNA_synth_N"/>
</dbReference>
<dbReference type="InterPro" id="IPR011035">
    <property type="entry name" value="Ribosomal_bL25/Gln-tRNA_synth"/>
</dbReference>
<dbReference type="InterPro" id="IPR014729">
    <property type="entry name" value="Rossmann-like_a/b/a_fold"/>
</dbReference>
<dbReference type="InterPro" id="IPR049437">
    <property type="entry name" value="tRNA-synt_1c_C2"/>
</dbReference>
<dbReference type="NCBIfam" id="TIGR00440">
    <property type="entry name" value="glnS"/>
    <property type="match status" value="1"/>
</dbReference>
<dbReference type="NCBIfam" id="NF011291">
    <property type="entry name" value="PRK14703.1"/>
    <property type="match status" value="1"/>
</dbReference>
<dbReference type="PANTHER" id="PTHR43097:SF5">
    <property type="entry name" value="GLUTAMATE--TRNA LIGASE"/>
    <property type="match status" value="1"/>
</dbReference>
<dbReference type="PANTHER" id="PTHR43097">
    <property type="entry name" value="GLUTAMINE-TRNA LIGASE"/>
    <property type="match status" value="1"/>
</dbReference>
<dbReference type="Pfam" id="PF00749">
    <property type="entry name" value="tRNA-synt_1c"/>
    <property type="match status" value="1"/>
</dbReference>
<dbReference type="Pfam" id="PF03950">
    <property type="entry name" value="tRNA-synt_1c_C"/>
    <property type="match status" value="1"/>
</dbReference>
<dbReference type="Pfam" id="PF20974">
    <property type="entry name" value="tRNA-synt_1c_C2"/>
    <property type="match status" value="1"/>
</dbReference>
<dbReference type="PRINTS" id="PR00987">
    <property type="entry name" value="TRNASYNTHGLU"/>
</dbReference>
<dbReference type="SUPFAM" id="SSF52374">
    <property type="entry name" value="Nucleotidylyl transferase"/>
    <property type="match status" value="1"/>
</dbReference>
<dbReference type="SUPFAM" id="SSF50715">
    <property type="entry name" value="Ribosomal protein L25-like"/>
    <property type="match status" value="1"/>
</dbReference>
<dbReference type="PROSITE" id="PS00178">
    <property type="entry name" value="AA_TRNA_LIGASE_I"/>
    <property type="match status" value="1"/>
</dbReference>
<protein>
    <recommendedName>
        <fullName evidence="1">Glutamine--tRNA ligase</fullName>
        <ecNumber evidence="1">6.1.1.18</ecNumber>
    </recommendedName>
    <alternativeName>
        <fullName evidence="1">Glutaminyl-tRNA synthetase</fullName>
        <shortName evidence="1">GlnRS</shortName>
    </alternativeName>
</protein>